<protein>
    <recommendedName>
        <fullName evidence="4">Cholesterol 22-hydroxylase CYP90B27</fullName>
        <ecNumber evidence="3">1.14.14.-</ecNumber>
    </recommendedName>
    <alternativeName>
        <fullName evidence="4">Cytochrome P450 CYP90B27</fullName>
        <shortName evidence="4">PpCYP90B27</shortName>
    </alternativeName>
</protein>
<feature type="chain" id="PRO_0000456408" description="Cholesterol 22-hydroxylase CYP90B27">
    <location>
        <begin position="1"/>
        <end position="484"/>
    </location>
</feature>
<feature type="transmembrane region" description="Helical" evidence="2">
    <location>
        <begin position="2"/>
        <end position="22"/>
    </location>
</feature>
<feature type="binding site" description="axial binding residue" evidence="1">
    <location>
        <position position="429"/>
    </location>
    <ligand>
        <name>heme</name>
        <dbReference type="ChEBI" id="CHEBI:30413"/>
    </ligand>
    <ligandPart>
        <name>Fe</name>
        <dbReference type="ChEBI" id="CHEBI:18248"/>
    </ligandPart>
</feature>
<comment type="function">
    <text evidence="3">Involved in the biosynthesis of steroidal saponins and alkaloids natural products from cholesterol such as spirostane-type saponins and polyphyllins, compounds with pharmacological activity (PubMed:30268044). Catalyzes the C-22 hydroxylation of cholesterol to form 22R-hydroxycholesterol (PubMed:30268044).</text>
</comment>
<comment type="catalytic activity">
    <reaction evidence="3">
        <text>cholesterol + reduced [NADPH--hemoprotein reductase] + O2 = (22R)-hydroxycholesterol + oxidized [NADPH--hemoprotein reductase] + H2O + H(+)</text>
        <dbReference type="Rhea" id="RHEA:46140"/>
        <dbReference type="Rhea" id="RHEA-COMP:11964"/>
        <dbReference type="Rhea" id="RHEA-COMP:11965"/>
        <dbReference type="ChEBI" id="CHEBI:15377"/>
        <dbReference type="ChEBI" id="CHEBI:15378"/>
        <dbReference type="ChEBI" id="CHEBI:15379"/>
        <dbReference type="ChEBI" id="CHEBI:16113"/>
        <dbReference type="ChEBI" id="CHEBI:57618"/>
        <dbReference type="ChEBI" id="CHEBI:58210"/>
        <dbReference type="ChEBI" id="CHEBI:67237"/>
    </reaction>
    <physiologicalReaction direction="left-to-right" evidence="3">
        <dbReference type="Rhea" id="RHEA:46141"/>
    </physiologicalReaction>
</comment>
<comment type="pathway">
    <text evidence="3">Steroid metabolism; cholesterol metabolism.</text>
</comment>
<comment type="subcellular location">
    <subcellularLocation>
        <location evidence="2">Membrane</location>
        <topology evidence="2">Single-pass membrane protein</topology>
    </subcellularLocation>
</comment>
<comment type="tissue specificity">
    <text evidence="3">Expressed in roots.</text>
</comment>
<comment type="developmental stage">
    <text evidence="3">In roots, accumulates progressively to reach a peak in 4-5 years old plants and later declining slowly in older plants.</text>
</comment>
<comment type="similarity">
    <text evidence="5">Belongs to the cytochrome P450 family.</text>
</comment>
<accession>A0A5A4DV62</accession>
<dbReference type="EC" id="1.14.14.-" evidence="3"/>
<dbReference type="EMBL" id="KX904822">
    <property type="protein sequence ID" value="ATN45454.1"/>
    <property type="molecule type" value="mRNA"/>
</dbReference>
<dbReference type="SMR" id="A0A5A4DV62"/>
<dbReference type="UniPathway" id="UPA00296"/>
<dbReference type="GO" id="GO:0016020">
    <property type="term" value="C:membrane"/>
    <property type="evidence" value="ECO:0007669"/>
    <property type="project" value="UniProtKB-SubCell"/>
</dbReference>
<dbReference type="GO" id="GO:0020037">
    <property type="term" value="F:heme binding"/>
    <property type="evidence" value="ECO:0007669"/>
    <property type="project" value="InterPro"/>
</dbReference>
<dbReference type="GO" id="GO:0005506">
    <property type="term" value="F:iron ion binding"/>
    <property type="evidence" value="ECO:0007669"/>
    <property type="project" value="InterPro"/>
</dbReference>
<dbReference type="GO" id="GO:0004497">
    <property type="term" value="F:monooxygenase activity"/>
    <property type="evidence" value="ECO:0007669"/>
    <property type="project" value="UniProtKB-KW"/>
</dbReference>
<dbReference type="GO" id="GO:0016705">
    <property type="term" value="F:oxidoreductase activity, acting on paired donors, with incorporation or reduction of molecular oxygen"/>
    <property type="evidence" value="ECO:0000314"/>
    <property type="project" value="UniProtKB"/>
</dbReference>
<dbReference type="GO" id="GO:0009821">
    <property type="term" value="P:alkaloid biosynthetic process"/>
    <property type="evidence" value="ECO:0000314"/>
    <property type="project" value="UniProtKB"/>
</dbReference>
<dbReference type="GO" id="GO:0016132">
    <property type="term" value="P:brassinosteroid biosynthetic process"/>
    <property type="evidence" value="ECO:0007669"/>
    <property type="project" value="TreeGrafter"/>
</dbReference>
<dbReference type="GO" id="GO:0010268">
    <property type="term" value="P:brassinosteroid homeostasis"/>
    <property type="evidence" value="ECO:0007669"/>
    <property type="project" value="TreeGrafter"/>
</dbReference>
<dbReference type="GO" id="GO:0008203">
    <property type="term" value="P:cholesterol metabolic process"/>
    <property type="evidence" value="ECO:0000314"/>
    <property type="project" value="UniProtKB"/>
</dbReference>
<dbReference type="GO" id="GO:0016135">
    <property type="term" value="P:saponin biosynthetic process"/>
    <property type="evidence" value="ECO:0000314"/>
    <property type="project" value="UniProtKB"/>
</dbReference>
<dbReference type="CDD" id="cd11043">
    <property type="entry name" value="CYP90-like"/>
    <property type="match status" value="1"/>
</dbReference>
<dbReference type="Gene3D" id="1.10.630.10">
    <property type="entry name" value="Cytochrome P450"/>
    <property type="match status" value="1"/>
</dbReference>
<dbReference type="InterPro" id="IPR001128">
    <property type="entry name" value="Cyt_P450"/>
</dbReference>
<dbReference type="InterPro" id="IPR017972">
    <property type="entry name" value="Cyt_P450_CS"/>
</dbReference>
<dbReference type="InterPro" id="IPR002401">
    <property type="entry name" value="Cyt_P450_E_grp-I"/>
</dbReference>
<dbReference type="InterPro" id="IPR036396">
    <property type="entry name" value="Cyt_P450_sf"/>
</dbReference>
<dbReference type="PANTHER" id="PTHR24286">
    <property type="entry name" value="CYTOCHROME P450 26"/>
    <property type="match status" value="1"/>
</dbReference>
<dbReference type="PANTHER" id="PTHR24286:SF194">
    <property type="entry name" value="STEROID (22S)-HYDROXYLASE"/>
    <property type="match status" value="1"/>
</dbReference>
<dbReference type="Pfam" id="PF00067">
    <property type="entry name" value="p450"/>
    <property type="match status" value="1"/>
</dbReference>
<dbReference type="PRINTS" id="PR00463">
    <property type="entry name" value="EP450I"/>
</dbReference>
<dbReference type="PRINTS" id="PR00385">
    <property type="entry name" value="P450"/>
</dbReference>
<dbReference type="SUPFAM" id="SSF48264">
    <property type="entry name" value="Cytochrome P450"/>
    <property type="match status" value="1"/>
</dbReference>
<dbReference type="PROSITE" id="PS00086">
    <property type="entry name" value="CYTOCHROME_P450"/>
    <property type="match status" value="1"/>
</dbReference>
<sequence>MALELILVLSSLIVILIIFFSFKSNGKSENKLAKLPPGQMGWPFIGQTIPFMQPHSSASLGLFMDQNIAKYGRIFRTNLLAKPTIVSADPDFNRYILQNEGRLFENSCPTSIKEIMGPWSMLALAGDIHREMRSIAVNFMSNVKLRTYFLPDIEQQAIKVLASWENTPEAFSAQEQGKKFAFNLMVKHLMSMDPGMPETEKLRTEYHAFMKGMASIPLNLPGTAYRKALQSRSIILKIMGQKLDERIRQVRDGCEGLEQDDLLASVSKHPHLTKEQILDLILSMLFAGHETSSAAIALAIYFLDSCPKAAQQLREEHVEIARQKAERGETGLNWDDYKQMEFTHCVINETLRLGNIVKFLHRKTLKDVQFKGYDIPCGWEVVTIISAAHLDPSVYDEPQRYNPWRWQNISATASKNNSIMSFSGGPRLCPGAELAKLEMAVFLHHLVRKFHWELAEHDYPVSFPFLGFPKGLPIKVRPLEKSEA</sequence>
<gene>
    <name evidence="4" type="primary">CYP90B27</name>
</gene>
<keyword id="KW-0153">Cholesterol metabolism</keyword>
<keyword id="KW-0349">Heme</keyword>
<keyword id="KW-0408">Iron</keyword>
<keyword id="KW-0444">Lipid biosynthesis</keyword>
<keyword id="KW-0443">Lipid metabolism</keyword>
<keyword id="KW-0472">Membrane</keyword>
<keyword id="KW-0479">Metal-binding</keyword>
<keyword id="KW-0503">Monooxygenase</keyword>
<keyword id="KW-0560">Oxidoreductase</keyword>
<keyword id="KW-0752">Steroid biosynthesis</keyword>
<keyword id="KW-0753">Steroid metabolism</keyword>
<keyword id="KW-1207">Sterol metabolism</keyword>
<keyword id="KW-0812">Transmembrane</keyword>
<keyword id="KW-1133">Transmembrane helix</keyword>
<proteinExistence type="evidence at protein level"/>
<evidence type="ECO:0000250" key="1">
    <source>
        <dbReference type="UniProtKB" id="P04798"/>
    </source>
</evidence>
<evidence type="ECO:0000255" key="2"/>
<evidence type="ECO:0000269" key="3">
    <source>
    </source>
</evidence>
<evidence type="ECO:0000303" key="4">
    <source>
    </source>
</evidence>
<evidence type="ECO:0000305" key="5"/>
<organism>
    <name type="scientific">Paris polyphylla</name>
    <name type="common">Daiswa polyphylla</name>
    <dbReference type="NCBI Taxonomy" id="49666"/>
    <lineage>
        <taxon>Eukaryota</taxon>
        <taxon>Viridiplantae</taxon>
        <taxon>Streptophyta</taxon>
        <taxon>Embryophyta</taxon>
        <taxon>Tracheophyta</taxon>
        <taxon>Spermatophyta</taxon>
        <taxon>Magnoliopsida</taxon>
        <taxon>Liliopsida</taxon>
        <taxon>Liliales</taxon>
        <taxon>Melanthiaceae</taxon>
        <taxon>Paris</taxon>
    </lineage>
</organism>
<name>C9B27_PARPY</name>
<reference key="1">
    <citation type="journal article" date="2018" name="Phytochemistry">
        <title>A cytochrome P450 monooxygenase responsible for the C-22 hydroxylation step in the Paris polyphylla steroidal saponin biosynthesis pathway.</title>
        <authorList>
            <person name="Yin Y."/>
            <person name="Gao L."/>
            <person name="Zhang X."/>
            <person name="Gao W."/>
        </authorList>
    </citation>
    <scope>NUCLEOTIDE SEQUENCE [MRNA]</scope>
    <scope>FUNCTION</scope>
    <scope>CATALYTIC ACTIVITY</scope>
    <scope>PATHWAY</scope>
    <scope>TISSUE SPECIFICITY</scope>
    <scope>DEVELOPMENTAL STAGE</scope>
    <source>
        <strain>cv. Yunnanensis</strain>
        <tissue>Leaf</tissue>
        <tissue>Root</tissue>
        <tissue>Stem</tissue>
    </source>
</reference>